<sequence length="145" mass="16746">MGRFIFVSFGLLVVFVSLSGTGADCPSGWSSYEGHCYKLFNQQSQWAHAEKFCTLQHTGGHLVSFHSTEEADFVVKLAFQNFGHGIFWMGLSNVWNQCSWQWSNAAKLKYEAWAEIYCVYFKSTNNKWRSRACRMEAYFVCEFQA</sequence>
<protein>
    <recommendedName>
        <fullName>Snaclec salmorin subunit B</fullName>
    </recommendedName>
</protein>
<name>SLB_GLOBR</name>
<evidence type="ECO:0000250" key="1"/>
<evidence type="ECO:0000255" key="2">
    <source>
        <dbReference type="PROSITE-ProRule" id="PRU00040"/>
    </source>
</evidence>
<evidence type="ECO:0000269" key="3">
    <source>
    </source>
</evidence>
<evidence type="ECO:0000305" key="4"/>
<feature type="signal peptide" evidence="3">
    <location>
        <begin position="1"/>
        <end position="23"/>
    </location>
</feature>
<feature type="chain" id="PRO_0000355236" description="Snaclec salmorin subunit B">
    <location>
        <begin position="24"/>
        <end position="145"/>
    </location>
</feature>
<feature type="domain" description="C-type lectin" evidence="2">
    <location>
        <begin position="32"/>
        <end position="142"/>
    </location>
</feature>
<feature type="binding site" evidence="1">
    <location>
        <position position="64"/>
    </location>
    <ligand>
        <name>Ca(2+)</name>
        <dbReference type="ChEBI" id="CHEBI:29108"/>
    </ligand>
</feature>
<feature type="binding site" evidence="1">
    <location>
        <position position="70"/>
    </location>
    <ligand>
        <name>Ca(2+)</name>
        <dbReference type="ChEBI" id="CHEBI:29108"/>
    </ligand>
</feature>
<feature type="binding site" evidence="1">
    <location>
        <position position="142"/>
    </location>
    <ligand>
        <name>Ca(2+)</name>
        <dbReference type="ChEBI" id="CHEBI:29108"/>
    </ligand>
</feature>
<feature type="disulfide bond" evidence="2">
    <location>
        <begin position="25"/>
        <end position="36"/>
    </location>
</feature>
<feature type="disulfide bond" evidence="2">
    <location>
        <begin position="53"/>
        <end position="141"/>
    </location>
</feature>
<feature type="disulfide bond" description="Interchain (with C-104 in subunit A)" evidence="2">
    <location>
        <position position="98"/>
    </location>
</feature>
<feature type="disulfide bond" evidence="2">
    <location>
        <begin position="118"/>
        <end position="133"/>
    </location>
</feature>
<proteinExistence type="evidence at protein level"/>
<comment type="function">
    <text evidence="3">Inhibits thrombin-induced fibrinogen clotting and factor Xa-induced prothrombin activation. Binds to thrombin and prothrombin exosites.</text>
</comment>
<comment type="subunit">
    <text evidence="3">Heterodimer of subunits A and B; disulfide-linked.</text>
</comment>
<comment type="subcellular location">
    <subcellularLocation>
        <location>Secreted</location>
    </subcellularLocation>
</comment>
<comment type="tissue specificity">
    <text>Expressed by the venom gland.</text>
</comment>
<comment type="similarity">
    <text evidence="4">Belongs to the snaclec family.</text>
</comment>
<keyword id="KW-1203">Blood coagulation cascade inhibiting toxin</keyword>
<keyword id="KW-0903">Direct protein sequencing</keyword>
<keyword id="KW-1015">Disulfide bond</keyword>
<keyword id="KW-1199">Hemostasis impairing toxin</keyword>
<keyword id="KW-0479">Metal-binding</keyword>
<keyword id="KW-0964">Secreted</keyword>
<keyword id="KW-0732">Signal</keyword>
<keyword id="KW-0800">Toxin</keyword>
<accession>Q9YGN4</accession>
<organism>
    <name type="scientific">Gloydius brevicauda</name>
    <name type="common">Korean slamosa snake</name>
    <name type="synonym">Agkistrodon halys brevicaudus</name>
    <dbReference type="NCBI Taxonomy" id="3148161"/>
    <lineage>
        <taxon>Eukaryota</taxon>
        <taxon>Metazoa</taxon>
        <taxon>Chordata</taxon>
        <taxon>Craniata</taxon>
        <taxon>Vertebrata</taxon>
        <taxon>Euteleostomi</taxon>
        <taxon>Lepidosauria</taxon>
        <taxon>Squamata</taxon>
        <taxon>Bifurcata</taxon>
        <taxon>Unidentata</taxon>
        <taxon>Episquamata</taxon>
        <taxon>Toxicofera</taxon>
        <taxon>Serpentes</taxon>
        <taxon>Colubroidea</taxon>
        <taxon>Viperidae</taxon>
        <taxon>Crotalinae</taxon>
        <taxon>Gloydius</taxon>
    </lineage>
</organism>
<reference key="1">
    <citation type="journal article" date="2000" name="Thromb. Res.">
        <title>Purification and cDNA cloning of salmorin that inhibits fibrinogen clotting.</title>
        <authorList>
            <person name="Koh Y.-S."/>
            <person name="Chung K.-H."/>
            <person name="Kim D.-S."/>
        </authorList>
    </citation>
    <scope>NUCLEOTIDE SEQUENCE [MRNA]</scope>
    <scope>PROTEIN SEQUENCE OF 24-43</scope>
    <scope>FUNCTION</scope>
    <scope>SUBUNIT</scope>
    <source>
        <tissue>Venom</tissue>
        <tissue>Venom gland</tissue>
    </source>
</reference>
<dbReference type="EMBL" id="AF125310">
    <property type="protein sequence ID" value="AAD18056.1"/>
    <property type="molecule type" value="mRNA"/>
</dbReference>
<dbReference type="SMR" id="Q9YGN4"/>
<dbReference type="GO" id="GO:0005576">
    <property type="term" value="C:extracellular region"/>
    <property type="evidence" value="ECO:0007669"/>
    <property type="project" value="UniProtKB-SubCell"/>
</dbReference>
<dbReference type="GO" id="GO:0046872">
    <property type="term" value="F:metal ion binding"/>
    <property type="evidence" value="ECO:0007669"/>
    <property type="project" value="UniProtKB-KW"/>
</dbReference>
<dbReference type="GO" id="GO:0090729">
    <property type="term" value="F:toxin activity"/>
    <property type="evidence" value="ECO:0007669"/>
    <property type="project" value="UniProtKB-KW"/>
</dbReference>
<dbReference type="FunFam" id="3.10.100.10:FF:000087">
    <property type="entry name" value="Snaclec rhodocetin subunit delta"/>
    <property type="match status" value="1"/>
</dbReference>
<dbReference type="Gene3D" id="3.10.100.10">
    <property type="entry name" value="Mannose-Binding Protein A, subunit A"/>
    <property type="match status" value="1"/>
</dbReference>
<dbReference type="InterPro" id="IPR001304">
    <property type="entry name" value="C-type_lectin-like"/>
</dbReference>
<dbReference type="InterPro" id="IPR016186">
    <property type="entry name" value="C-type_lectin-like/link_sf"/>
</dbReference>
<dbReference type="InterPro" id="IPR050111">
    <property type="entry name" value="C-type_lectin/snaclec_domain"/>
</dbReference>
<dbReference type="InterPro" id="IPR018378">
    <property type="entry name" value="C-type_lectin_CS"/>
</dbReference>
<dbReference type="InterPro" id="IPR016187">
    <property type="entry name" value="CTDL_fold"/>
</dbReference>
<dbReference type="PANTHER" id="PTHR22803">
    <property type="entry name" value="MANNOSE, PHOSPHOLIPASE, LECTIN RECEPTOR RELATED"/>
    <property type="match status" value="1"/>
</dbReference>
<dbReference type="Pfam" id="PF00059">
    <property type="entry name" value="Lectin_C"/>
    <property type="match status" value="1"/>
</dbReference>
<dbReference type="PRINTS" id="PR01504">
    <property type="entry name" value="PNCREATITSAP"/>
</dbReference>
<dbReference type="SMART" id="SM00034">
    <property type="entry name" value="CLECT"/>
    <property type="match status" value="1"/>
</dbReference>
<dbReference type="SUPFAM" id="SSF56436">
    <property type="entry name" value="C-type lectin-like"/>
    <property type="match status" value="1"/>
</dbReference>
<dbReference type="PROSITE" id="PS00615">
    <property type="entry name" value="C_TYPE_LECTIN_1"/>
    <property type="match status" value="1"/>
</dbReference>
<dbReference type="PROSITE" id="PS50041">
    <property type="entry name" value="C_TYPE_LECTIN_2"/>
    <property type="match status" value="1"/>
</dbReference>